<accession>Q3IMK8</accession>
<dbReference type="EC" id="3.1.21.2" evidence="1"/>
<dbReference type="EMBL" id="CR936257">
    <property type="protein sequence ID" value="CAI50650.1"/>
    <property type="molecule type" value="Genomic_DNA"/>
</dbReference>
<dbReference type="RefSeq" id="WP_011324260.1">
    <property type="nucleotide sequence ID" value="NC_007426.1"/>
</dbReference>
<dbReference type="SMR" id="Q3IMK8"/>
<dbReference type="STRING" id="348780.NP_5118A"/>
<dbReference type="EnsemblBacteria" id="CAI50650">
    <property type="protein sequence ID" value="CAI50650"/>
    <property type="gene ID" value="NP_5118A"/>
</dbReference>
<dbReference type="GeneID" id="3702262"/>
<dbReference type="KEGG" id="nph:NP_5118A"/>
<dbReference type="eggNOG" id="arCOG01894">
    <property type="taxonomic scope" value="Archaea"/>
</dbReference>
<dbReference type="HOGENOM" id="CLU_025885_0_1_2"/>
<dbReference type="OrthoDB" id="33250at2157"/>
<dbReference type="Proteomes" id="UP000002698">
    <property type="component" value="Chromosome"/>
</dbReference>
<dbReference type="GO" id="GO:0008833">
    <property type="term" value="F:deoxyribonuclease IV (phage-T4-induced) activity"/>
    <property type="evidence" value="ECO:0007669"/>
    <property type="project" value="UniProtKB-UniRule"/>
</dbReference>
<dbReference type="GO" id="GO:0003677">
    <property type="term" value="F:DNA binding"/>
    <property type="evidence" value="ECO:0007669"/>
    <property type="project" value="InterPro"/>
</dbReference>
<dbReference type="GO" id="GO:0003906">
    <property type="term" value="F:DNA-(apurinic or apyrimidinic site) endonuclease activity"/>
    <property type="evidence" value="ECO:0007669"/>
    <property type="project" value="TreeGrafter"/>
</dbReference>
<dbReference type="GO" id="GO:0008081">
    <property type="term" value="F:phosphoric diester hydrolase activity"/>
    <property type="evidence" value="ECO:0007669"/>
    <property type="project" value="TreeGrafter"/>
</dbReference>
<dbReference type="GO" id="GO:0008270">
    <property type="term" value="F:zinc ion binding"/>
    <property type="evidence" value="ECO:0007669"/>
    <property type="project" value="UniProtKB-UniRule"/>
</dbReference>
<dbReference type="GO" id="GO:0006284">
    <property type="term" value="P:base-excision repair"/>
    <property type="evidence" value="ECO:0007669"/>
    <property type="project" value="TreeGrafter"/>
</dbReference>
<dbReference type="CDD" id="cd00019">
    <property type="entry name" value="AP2Ec"/>
    <property type="match status" value="1"/>
</dbReference>
<dbReference type="FunFam" id="3.20.20.150:FF:000001">
    <property type="entry name" value="Probable endonuclease 4"/>
    <property type="match status" value="1"/>
</dbReference>
<dbReference type="Gene3D" id="3.20.20.150">
    <property type="entry name" value="Divalent-metal-dependent TIM barrel enzymes"/>
    <property type="match status" value="1"/>
</dbReference>
<dbReference type="HAMAP" id="MF_00152">
    <property type="entry name" value="Nfo"/>
    <property type="match status" value="1"/>
</dbReference>
<dbReference type="InterPro" id="IPR001719">
    <property type="entry name" value="AP_endonuc_2"/>
</dbReference>
<dbReference type="InterPro" id="IPR018246">
    <property type="entry name" value="AP_endonuc_F2_Zn_BS"/>
</dbReference>
<dbReference type="InterPro" id="IPR036237">
    <property type="entry name" value="Xyl_isomerase-like_sf"/>
</dbReference>
<dbReference type="InterPro" id="IPR013022">
    <property type="entry name" value="Xyl_isomerase-like_TIM-brl"/>
</dbReference>
<dbReference type="NCBIfam" id="TIGR00587">
    <property type="entry name" value="nfo"/>
    <property type="match status" value="1"/>
</dbReference>
<dbReference type="PANTHER" id="PTHR21445:SF0">
    <property type="entry name" value="APURINIC-APYRIMIDINIC ENDONUCLEASE"/>
    <property type="match status" value="1"/>
</dbReference>
<dbReference type="PANTHER" id="PTHR21445">
    <property type="entry name" value="ENDONUCLEASE IV ENDODEOXYRIBONUCLEASE IV"/>
    <property type="match status" value="1"/>
</dbReference>
<dbReference type="Pfam" id="PF01261">
    <property type="entry name" value="AP_endonuc_2"/>
    <property type="match status" value="1"/>
</dbReference>
<dbReference type="SMART" id="SM00518">
    <property type="entry name" value="AP2Ec"/>
    <property type="match status" value="1"/>
</dbReference>
<dbReference type="SUPFAM" id="SSF51658">
    <property type="entry name" value="Xylose isomerase-like"/>
    <property type="match status" value="1"/>
</dbReference>
<dbReference type="PROSITE" id="PS00731">
    <property type="entry name" value="AP_NUCLEASE_F2_3"/>
    <property type="match status" value="1"/>
</dbReference>
<dbReference type="PROSITE" id="PS51432">
    <property type="entry name" value="AP_NUCLEASE_F2_4"/>
    <property type="match status" value="1"/>
</dbReference>
<comment type="function">
    <text evidence="1">Endonuclease IV plays a role in DNA repair. It cleaves phosphodiester bonds at apurinic or apyrimidinic (AP) sites, generating a 3'-hydroxyl group and a 5'-terminal sugar phosphate.</text>
</comment>
<comment type="catalytic activity">
    <reaction evidence="1">
        <text>Endonucleolytic cleavage to 5'-phosphooligonucleotide end-products.</text>
        <dbReference type="EC" id="3.1.21.2"/>
    </reaction>
</comment>
<comment type="cofactor">
    <cofactor evidence="1">
        <name>Zn(2+)</name>
        <dbReference type="ChEBI" id="CHEBI:29105"/>
    </cofactor>
    <text evidence="1">Binds 3 Zn(2+) ions.</text>
</comment>
<comment type="similarity">
    <text evidence="1">Belongs to the AP endonuclease 2 family.</text>
</comment>
<organism>
    <name type="scientific">Natronomonas pharaonis (strain ATCC 35678 / DSM 2160 / CIP 103997 / JCM 8858 / NBRC 14720 / NCIMB 2260 / Gabara)</name>
    <name type="common">Halobacterium pharaonis</name>
    <dbReference type="NCBI Taxonomy" id="348780"/>
    <lineage>
        <taxon>Archaea</taxon>
        <taxon>Methanobacteriati</taxon>
        <taxon>Methanobacteriota</taxon>
        <taxon>Stenosarchaea group</taxon>
        <taxon>Halobacteria</taxon>
        <taxon>Halobacteriales</taxon>
        <taxon>Haloarculaceae</taxon>
        <taxon>Natronomonas</taxon>
    </lineage>
</organism>
<evidence type="ECO:0000255" key="1">
    <source>
        <dbReference type="HAMAP-Rule" id="MF_00152"/>
    </source>
</evidence>
<keyword id="KW-0227">DNA damage</keyword>
<keyword id="KW-0234">DNA repair</keyword>
<keyword id="KW-0255">Endonuclease</keyword>
<keyword id="KW-0378">Hydrolase</keyword>
<keyword id="KW-0479">Metal-binding</keyword>
<keyword id="KW-0540">Nuclease</keyword>
<keyword id="KW-1185">Reference proteome</keyword>
<keyword id="KW-0862">Zinc</keyword>
<protein>
    <recommendedName>
        <fullName evidence="1">Probable endonuclease 4</fullName>
        <ecNumber evidence="1">3.1.21.2</ecNumber>
    </recommendedName>
    <alternativeName>
        <fullName evidence="1">Endodeoxyribonuclease IV</fullName>
    </alternativeName>
    <alternativeName>
        <fullName evidence="1">Endonuclease IV</fullName>
    </alternativeName>
</protein>
<gene>
    <name evidence="1" type="primary">nfo</name>
    <name type="ordered locus">NP_5118A</name>
</gene>
<name>END4_NATPD</name>
<feature type="chain" id="PRO_1000011325" description="Probable endonuclease 4">
    <location>
        <begin position="1"/>
        <end position="278"/>
    </location>
</feature>
<feature type="binding site" evidence="1">
    <location>
        <position position="67"/>
    </location>
    <ligand>
        <name>Zn(2+)</name>
        <dbReference type="ChEBI" id="CHEBI:29105"/>
        <label>1</label>
    </ligand>
</feature>
<feature type="binding site" evidence="1">
    <location>
        <position position="107"/>
    </location>
    <ligand>
        <name>Zn(2+)</name>
        <dbReference type="ChEBI" id="CHEBI:29105"/>
        <label>1</label>
    </ligand>
</feature>
<feature type="binding site" evidence="1">
    <location>
        <position position="141"/>
    </location>
    <ligand>
        <name>Zn(2+)</name>
        <dbReference type="ChEBI" id="CHEBI:29105"/>
        <label>1</label>
    </ligand>
</feature>
<feature type="binding site" evidence="1">
    <location>
        <position position="141"/>
    </location>
    <ligand>
        <name>Zn(2+)</name>
        <dbReference type="ChEBI" id="CHEBI:29105"/>
        <label>2</label>
    </ligand>
</feature>
<feature type="binding site" evidence="1">
    <location>
        <position position="173"/>
    </location>
    <ligand>
        <name>Zn(2+)</name>
        <dbReference type="ChEBI" id="CHEBI:29105"/>
        <label>2</label>
    </ligand>
</feature>
<feature type="binding site" evidence="1">
    <location>
        <position position="176"/>
    </location>
    <ligand>
        <name>Zn(2+)</name>
        <dbReference type="ChEBI" id="CHEBI:29105"/>
        <label>3</label>
    </ligand>
</feature>
<feature type="binding site" evidence="1">
    <location>
        <position position="210"/>
    </location>
    <ligand>
        <name>Zn(2+)</name>
        <dbReference type="ChEBI" id="CHEBI:29105"/>
        <label>2</label>
    </ligand>
</feature>
<feature type="binding site" evidence="1">
    <location>
        <position position="223"/>
    </location>
    <ligand>
        <name>Zn(2+)</name>
        <dbReference type="ChEBI" id="CHEBI:29105"/>
        <label>3</label>
    </ligand>
</feature>
<feature type="binding site" evidence="1">
    <location>
        <position position="225"/>
    </location>
    <ligand>
        <name>Zn(2+)</name>
        <dbReference type="ChEBI" id="CHEBI:29105"/>
        <label>3</label>
    </ligand>
</feature>
<feature type="binding site" evidence="1">
    <location>
        <position position="255"/>
    </location>
    <ligand>
        <name>Zn(2+)</name>
        <dbReference type="ChEBI" id="CHEBI:29105"/>
        <label>2</label>
    </ligand>
</feature>
<proteinExistence type="inferred from homology"/>
<reference key="1">
    <citation type="journal article" date="2005" name="Genome Res.">
        <title>Living with two extremes: conclusions from the genome sequence of Natronomonas pharaonis.</title>
        <authorList>
            <person name="Falb M."/>
            <person name="Pfeiffer F."/>
            <person name="Palm P."/>
            <person name="Rodewald K."/>
            <person name="Hickmann V."/>
            <person name="Tittor J."/>
            <person name="Oesterhelt D."/>
        </authorList>
    </citation>
    <scope>NUCLEOTIDE SEQUENCE [LARGE SCALE GENOMIC DNA]</scope>
    <source>
        <strain>ATCC 35678 / DSM 2160 / CIP 103997 / JCM 8858 / NBRC 14720 / NCIMB 2260 / Gabara</strain>
    </source>
</reference>
<sequence>MVQVGAHTSIAGGVDNAVEEQLEYDGTCGQIFTHSPQVWQDPNIGDEEATAFRDRSAEAGVGPWVIHSSYLVNLCTPKDDLREKSIDSMQKEVDAAATLHIPYVNVHLGAHTGAGVEQGLDNAASALEELDIPDGVTVLIESDAGSGTKLGSTFEELAGVLDRCDQPLDVCLDTAHMFAAGYDLSTPEGVAETFEAFDETVGLDHLEYIHLNDSKHDCGTNKDEHAHIGEGKIGEAGMRAFINHEAVADVPFVLETPTENGKSYPWNIKRVRELYEEA</sequence>